<protein>
    <recommendedName>
        <fullName evidence="5">Dynein axonemal intermediate chain 4</fullName>
    </recommendedName>
    <alternativeName>
        <fullName>WD repeat-containing protein 78</fullName>
    </alternativeName>
</protein>
<proteinExistence type="evidence at transcript level"/>
<evidence type="ECO:0000250" key="1">
    <source>
        <dbReference type="UniProtKB" id="E9PYY5"/>
    </source>
</evidence>
<evidence type="ECO:0000250" key="2">
    <source>
        <dbReference type="UniProtKB" id="Q6GPB9"/>
    </source>
</evidence>
<evidence type="ECO:0000255" key="3"/>
<evidence type="ECO:0000269" key="4">
    <source>
    </source>
</evidence>
<evidence type="ECO:0000305" key="5"/>
<evidence type="ECO:0000312" key="6">
    <source>
        <dbReference type="ZFIN" id="ZDB-GENE-050522-322"/>
    </source>
</evidence>
<organism>
    <name type="scientific">Danio rerio</name>
    <name type="common">Zebrafish</name>
    <name type="synonym">Brachydanio rerio</name>
    <dbReference type="NCBI Taxonomy" id="7955"/>
    <lineage>
        <taxon>Eukaryota</taxon>
        <taxon>Metazoa</taxon>
        <taxon>Chordata</taxon>
        <taxon>Craniata</taxon>
        <taxon>Vertebrata</taxon>
        <taxon>Euteleostomi</taxon>
        <taxon>Actinopterygii</taxon>
        <taxon>Neopterygii</taxon>
        <taxon>Teleostei</taxon>
        <taxon>Ostariophysi</taxon>
        <taxon>Cypriniformes</taxon>
        <taxon>Danionidae</taxon>
        <taxon>Danioninae</taxon>
        <taxon>Danio</taxon>
    </lineage>
</organism>
<reference key="1">
    <citation type="journal article" date="2013" name="Nature">
        <title>The zebrafish reference genome sequence and its relationship to the human genome.</title>
        <authorList>
            <person name="Howe K."/>
            <person name="Clark M.D."/>
            <person name="Torroja C.F."/>
            <person name="Torrance J."/>
            <person name="Berthelot C."/>
            <person name="Muffato M."/>
            <person name="Collins J.E."/>
            <person name="Humphray S."/>
            <person name="McLaren K."/>
            <person name="Matthews L."/>
            <person name="McLaren S."/>
            <person name="Sealy I."/>
            <person name="Caccamo M."/>
            <person name="Churcher C."/>
            <person name="Scott C."/>
            <person name="Barrett J.C."/>
            <person name="Koch R."/>
            <person name="Rauch G.J."/>
            <person name="White S."/>
            <person name="Chow W."/>
            <person name="Kilian B."/>
            <person name="Quintais L.T."/>
            <person name="Guerra-Assuncao J.A."/>
            <person name="Zhou Y."/>
            <person name="Gu Y."/>
            <person name="Yen J."/>
            <person name="Vogel J.H."/>
            <person name="Eyre T."/>
            <person name="Redmond S."/>
            <person name="Banerjee R."/>
            <person name="Chi J."/>
            <person name="Fu B."/>
            <person name="Langley E."/>
            <person name="Maguire S.F."/>
            <person name="Laird G.K."/>
            <person name="Lloyd D."/>
            <person name="Kenyon E."/>
            <person name="Donaldson S."/>
            <person name="Sehra H."/>
            <person name="Almeida-King J."/>
            <person name="Loveland J."/>
            <person name="Trevanion S."/>
            <person name="Jones M."/>
            <person name="Quail M."/>
            <person name="Willey D."/>
            <person name="Hunt A."/>
            <person name="Burton J."/>
            <person name="Sims S."/>
            <person name="McLay K."/>
            <person name="Plumb B."/>
            <person name="Davis J."/>
            <person name="Clee C."/>
            <person name="Oliver K."/>
            <person name="Clark R."/>
            <person name="Riddle C."/>
            <person name="Elliot D."/>
            <person name="Threadgold G."/>
            <person name="Harden G."/>
            <person name="Ware D."/>
            <person name="Begum S."/>
            <person name="Mortimore B."/>
            <person name="Kerry G."/>
            <person name="Heath P."/>
            <person name="Phillimore B."/>
            <person name="Tracey A."/>
            <person name="Corby N."/>
            <person name="Dunn M."/>
            <person name="Johnson C."/>
            <person name="Wood J."/>
            <person name="Clark S."/>
            <person name="Pelan S."/>
            <person name="Griffiths G."/>
            <person name="Smith M."/>
            <person name="Glithero R."/>
            <person name="Howden P."/>
            <person name="Barker N."/>
            <person name="Lloyd C."/>
            <person name="Stevens C."/>
            <person name="Harley J."/>
            <person name="Holt K."/>
            <person name="Panagiotidis G."/>
            <person name="Lovell J."/>
            <person name="Beasley H."/>
            <person name="Henderson C."/>
            <person name="Gordon D."/>
            <person name="Auger K."/>
            <person name="Wright D."/>
            <person name="Collins J."/>
            <person name="Raisen C."/>
            <person name="Dyer L."/>
            <person name="Leung K."/>
            <person name="Robertson L."/>
            <person name="Ambridge K."/>
            <person name="Leongamornlert D."/>
            <person name="McGuire S."/>
            <person name="Gilderthorp R."/>
            <person name="Griffiths C."/>
            <person name="Manthravadi D."/>
            <person name="Nichol S."/>
            <person name="Barker G."/>
            <person name="Whitehead S."/>
            <person name="Kay M."/>
            <person name="Brown J."/>
            <person name="Murnane C."/>
            <person name="Gray E."/>
            <person name="Humphries M."/>
            <person name="Sycamore N."/>
            <person name="Barker D."/>
            <person name="Saunders D."/>
            <person name="Wallis J."/>
            <person name="Babbage A."/>
            <person name="Hammond S."/>
            <person name="Mashreghi-Mohammadi M."/>
            <person name="Barr L."/>
            <person name="Martin S."/>
            <person name="Wray P."/>
            <person name="Ellington A."/>
            <person name="Matthews N."/>
            <person name="Ellwood M."/>
            <person name="Woodmansey R."/>
            <person name="Clark G."/>
            <person name="Cooper J."/>
            <person name="Tromans A."/>
            <person name="Grafham D."/>
            <person name="Skuce C."/>
            <person name="Pandian R."/>
            <person name="Andrews R."/>
            <person name="Harrison E."/>
            <person name="Kimberley A."/>
            <person name="Garnett J."/>
            <person name="Fosker N."/>
            <person name="Hall R."/>
            <person name="Garner P."/>
            <person name="Kelly D."/>
            <person name="Bird C."/>
            <person name="Palmer S."/>
            <person name="Gehring I."/>
            <person name="Berger A."/>
            <person name="Dooley C.M."/>
            <person name="Ersan-Urun Z."/>
            <person name="Eser C."/>
            <person name="Geiger H."/>
            <person name="Geisler M."/>
            <person name="Karotki L."/>
            <person name="Kirn A."/>
            <person name="Konantz J."/>
            <person name="Konantz M."/>
            <person name="Oberlander M."/>
            <person name="Rudolph-Geiger S."/>
            <person name="Teucke M."/>
            <person name="Lanz C."/>
            <person name="Raddatz G."/>
            <person name="Osoegawa K."/>
            <person name="Zhu B."/>
            <person name="Rapp A."/>
            <person name="Widaa S."/>
            <person name="Langford C."/>
            <person name="Yang F."/>
            <person name="Schuster S.C."/>
            <person name="Carter N.P."/>
            <person name="Harrow J."/>
            <person name="Ning Z."/>
            <person name="Herrero J."/>
            <person name="Searle S.M."/>
            <person name="Enright A."/>
            <person name="Geisler R."/>
            <person name="Plasterk R.H."/>
            <person name="Lee C."/>
            <person name="Westerfield M."/>
            <person name="de Jong P.J."/>
            <person name="Zon L.I."/>
            <person name="Postlethwait J.H."/>
            <person name="Nusslein-Volhard C."/>
            <person name="Hubbard T.J."/>
            <person name="Roest Crollius H."/>
            <person name="Rogers J."/>
            <person name="Stemple D.L."/>
        </authorList>
    </citation>
    <scope>NUCLEOTIDE SEQUENCE [LARGE SCALE GENOMIC DNA]</scope>
    <source>
        <strain>Tuebingen</strain>
    </source>
</reference>
<reference key="2">
    <citation type="submission" date="2005-05" db="EMBL/GenBank/DDBJ databases">
        <authorList>
            <consortium name="NIH - Zebrafish Gene Collection (ZGC) project"/>
        </authorList>
    </citation>
    <scope>NUCLEOTIDE SEQUENCE [LARGE SCALE MRNA]</scope>
    <source>
        <tissue>Olfactory epithelium</tissue>
    </source>
</reference>
<reference key="3">
    <citation type="journal article" date="2019" name="J. Mol. Cell Biol.">
        <title>Vertebrate Dynein-f depends on Wdr78 for axonemal localization and is essential for ciliary beat.</title>
        <authorList>
            <person name="Zhang Y."/>
            <person name="Chen Y."/>
            <person name="Zheng J."/>
            <person name="Wang J."/>
            <person name="Duan S."/>
            <person name="Zhang W."/>
            <person name="Yan X."/>
            <person name="Zhu X."/>
        </authorList>
    </citation>
    <scope>DISRUPTION PHENOTYPE</scope>
    <scope>FUNCTION</scope>
</reference>
<feature type="chain" id="PRO_0000450826" description="Dynein axonemal intermediate chain 4">
    <location>
        <begin position="1"/>
        <end position="778"/>
    </location>
</feature>
<feature type="repeat" description="WD 1" evidence="3">
    <location>
        <begin position="477"/>
        <end position="517"/>
    </location>
</feature>
<feature type="repeat" description="WD 2" evidence="3">
    <location>
        <begin position="526"/>
        <end position="573"/>
    </location>
</feature>
<feature type="repeat" description="WD 3" evidence="3">
    <location>
        <begin position="586"/>
        <end position="629"/>
    </location>
</feature>
<feature type="repeat" description="WD 4" evidence="3">
    <location>
        <begin position="633"/>
        <end position="673"/>
    </location>
</feature>
<feature type="repeat" description="WD 5" evidence="3">
    <location>
        <begin position="676"/>
        <end position="715"/>
    </location>
</feature>
<feature type="repeat" description="WD 6" evidence="3">
    <location>
        <begin position="721"/>
        <end position="760"/>
    </location>
</feature>
<feature type="sequence conflict" description="In Ref. 2; AAH95632." evidence="5" ref="2">
    <original>V</original>
    <variation>L</variation>
    <location>
        <position position="56"/>
    </location>
</feature>
<feature type="sequence conflict" description="In Ref. 2; AAH95632." evidence="5" ref="2">
    <original>M</original>
    <variation>V</variation>
    <location>
        <position position="70"/>
    </location>
</feature>
<feature type="sequence conflict" description="In Ref. 2; AAH95632." evidence="5" ref="2">
    <original>V</original>
    <variation>L</variation>
    <location>
        <position position="211"/>
    </location>
</feature>
<feature type="sequence conflict" description="In Ref. 2; AAH95632." evidence="5" ref="2">
    <original>S</original>
    <variation>P</variation>
    <location>
        <position position="251"/>
    </location>
</feature>
<feature type="sequence conflict" description="In Ref. 2; AAH95632." evidence="5" ref="2">
    <original>S</original>
    <variation>P</variation>
    <location>
        <position position="305"/>
    </location>
</feature>
<feature type="sequence conflict" description="In Ref. 2; AAH95632." evidence="5" ref="2">
    <original>S</original>
    <variation>T</variation>
    <location>
        <position position="432"/>
    </location>
</feature>
<feature type="sequence conflict" description="In Ref. 2; AAH95632." evidence="5" ref="2">
    <original>H</original>
    <variation>Y</variation>
    <location>
        <position position="477"/>
    </location>
</feature>
<feature type="sequence conflict" description="In Ref. 2; AAH95632." evidence="5" ref="2">
    <original>R</original>
    <variation>Q</variation>
    <location>
        <position position="586"/>
    </location>
</feature>
<feature type="sequence conflict" description="In Ref. 2; AAH95632." evidence="5" ref="2">
    <original>E</original>
    <variation>D</variation>
    <location>
        <position position="629"/>
    </location>
</feature>
<gene>
    <name evidence="6" type="primary">dnai4</name>
    <name type="synonym">wdr78</name>
</gene>
<dbReference type="EMBL" id="BX088595">
    <property type="status" value="NOT_ANNOTATED_CDS"/>
    <property type="molecule type" value="Genomic_DNA"/>
</dbReference>
<dbReference type="EMBL" id="BC095632">
    <property type="protein sequence ID" value="AAH95632.1"/>
    <property type="molecule type" value="mRNA"/>
</dbReference>
<dbReference type="RefSeq" id="NP_001018595.1">
    <property type="nucleotide sequence ID" value="NM_001020759.1"/>
</dbReference>
<dbReference type="SMR" id="F1QHZ6"/>
<dbReference type="FunCoup" id="F1QHZ6">
    <property type="interactions" value="299"/>
</dbReference>
<dbReference type="STRING" id="7955.ENSDARP00000065205"/>
<dbReference type="PaxDb" id="7955-ENSDARP00000065205"/>
<dbReference type="Ensembl" id="ENSDART00000065206">
    <property type="protein sequence ID" value="ENSDARP00000065205"/>
    <property type="gene ID" value="ENSDARG00000044400"/>
</dbReference>
<dbReference type="Ensembl" id="ENSDART00000181971">
    <property type="protein sequence ID" value="ENSDARP00000146535"/>
    <property type="gene ID" value="ENSDARG00000109570"/>
</dbReference>
<dbReference type="GeneID" id="553797"/>
<dbReference type="KEGG" id="dre:553797"/>
<dbReference type="AGR" id="ZFIN:ZDB-GENE-050522-322"/>
<dbReference type="CTD" id="79819"/>
<dbReference type="ZFIN" id="ZDB-GENE-050522-322">
    <property type="gene designation" value="dnai4"/>
</dbReference>
<dbReference type="eggNOG" id="KOG1587">
    <property type="taxonomic scope" value="Eukaryota"/>
</dbReference>
<dbReference type="HOGENOM" id="CLU_015820_0_0_1"/>
<dbReference type="InParanoid" id="F1QHZ6"/>
<dbReference type="OMA" id="VFVWSIK"/>
<dbReference type="OrthoDB" id="10259804at2759"/>
<dbReference type="PhylomeDB" id="F1QHZ6"/>
<dbReference type="TreeFam" id="TF300553"/>
<dbReference type="PRO" id="PR:F1QHZ6"/>
<dbReference type="Proteomes" id="UP000000437">
    <property type="component" value="Alternate scaffold 6"/>
</dbReference>
<dbReference type="Proteomes" id="UP000000437">
    <property type="component" value="Chromosome 6"/>
</dbReference>
<dbReference type="Bgee" id="ENSDARG00000044400">
    <property type="expression patterns" value="Expressed in testis and 8 other cell types or tissues"/>
</dbReference>
<dbReference type="GO" id="GO:0005858">
    <property type="term" value="C:axonemal dynein complex"/>
    <property type="evidence" value="ECO:0000250"/>
    <property type="project" value="UniProtKB"/>
</dbReference>
<dbReference type="GO" id="GO:0005930">
    <property type="term" value="C:axoneme"/>
    <property type="evidence" value="ECO:0000250"/>
    <property type="project" value="UniProtKB"/>
</dbReference>
<dbReference type="GO" id="GO:0120293">
    <property type="term" value="C:dynein axonemal particle"/>
    <property type="evidence" value="ECO:0000250"/>
    <property type="project" value="UniProtKB"/>
</dbReference>
<dbReference type="GO" id="GO:0031514">
    <property type="term" value="C:motile cilium"/>
    <property type="evidence" value="ECO:0000250"/>
    <property type="project" value="UniProtKB"/>
</dbReference>
<dbReference type="GO" id="GO:0045504">
    <property type="term" value="F:dynein heavy chain binding"/>
    <property type="evidence" value="ECO:0000318"/>
    <property type="project" value="GO_Central"/>
</dbReference>
<dbReference type="GO" id="GO:0045503">
    <property type="term" value="F:dynein light chain binding"/>
    <property type="evidence" value="ECO:0000318"/>
    <property type="project" value="GO_Central"/>
</dbReference>
<dbReference type="GO" id="GO:0070286">
    <property type="term" value="P:axonemal dynein complex assembly"/>
    <property type="evidence" value="ECO:0000250"/>
    <property type="project" value="UniProtKB"/>
</dbReference>
<dbReference type="GO" id="GO:0003341">
    <property type="term" value="P:cilium movement"/>
    <property type="evidence" value="ECO:0000315"/>
    <property type="project" value="ZFIN"/>
</dbReference>
<dbReference type="FunFam" id="2.130.10.10:FF:000373">
    <property type="entry name" value="WD repeat domain 78"/>
    <property type="match status" value="1"/>
</dbReference>
<dbReference type="FunFam" id="2.130.10.10:FF:000379">
    <property type="entry name" value="WD repeat domain 78"/>
    <property type="match status" value="1"/>
</dbReference>
<dbReference type="Gene3D" id="2.130.10.10">
    <property type="entry name" value="YVTN repeat-like/Quinoprotein amine dehydrogenase"/>
    <property type="match status" value="2"/>
</dbReference>
<dbReference type="InterPro" id="IPR050687">
    <property type="entry name" value="Dynein_IC"/>
</dbReference>
<dbReference type="InterPro" id="IPR015943">
    <property type="entry name" value="WD40/YVTN_repeat-like_dom_sf"/>
</dbReference>
<dbReference type="InterPro" id="IPR036322">
    <property type="entry name" value="WD40_repeat_dom_sf"/>
</dbReference>
<dbReference type="InterPro" id="IPR001680">
    <property type="entry name" value="WD40_rpt"/>
</dbReference>
<dbReference type="PANTHER" id="PTHR12442:SF12">
    <property type="entry name" value="DYNEIN AXONEMAL INTERMEDIATE CHAIN 4"/>
    <property type="match status" value="1"/>
</dbReference>
<dbReference type="PANTHER" id="PTHR12442">
    <property type="entry name" value="DYNEIN INTERMEDIATE CHAIN"/>
    <property type="match status" value="1"/>
</dbReference>
<dbReference type="Pfam" id="PF00400">
    <property type="entry name" value="WD40"/>
    <property type="match status" value="2"/>
</dbReference>
<dbReference type="SMART" id="SM00320">
    <property type="entry name" value="WD40"/>
    <property type="match status" value="5"/>
</dbReference>
<dbReference type="SUPFAM" id="SSF50978">
    <property type="entry name" value="WD40 repeat-like"/>
    <property type="match status" value="1"/>
</dbReference>
<dbReference type="PROSITE" id="PS50082">
    <property type="entry name" value="WD_REPEATS_2"/>
    <property type="match status" value="1"/>
</dbReference>
<dbReference type="PROSITE" id="PS50294">
    <property type="entry name" value="WD_REPEATS_REGION"/>
    <property type="match status" value="1"/>
</dbReference>
<name>DNAI4_DANRE</name>
<comment type="function">
    <text evidence="1 4">Plays a critical role in the assembly of axonemal dynein complex (By similarity). Plays a key role in ciliary motility (PubMed:30060180).</text>
</comment>
<comment type="subunit">
    <text evidence="1">Part of the multisubunit axonemal dynein complex formed at least of two heavy chains and a number of intermediate and light chains.</text>
</comment>
<comment type="subcellular location">
    <subcellularLocation>
        <location evidence="1">Cytoplasm</location>
        <location evidence="1">Cytoskeleton</location>
        <location evidence="1">Flagellum axoneme</location>
    </subcellularLocation>
    <subcellularLocation>
        <location evidence="1">Cytoplasm</location>
        <location evidence="1">Cytoskeleton</location>
        <location evidence="1">Cilium axoneme</location>
    </subcellularLocation>
    <subcellularLocation>
        <location evidence="2">Dynein axonemal particle</location>
    </subcellularLocation>
</comment>
<comment type="disruption phenotype">
    <text evidence="4">Morpholino knockdown results in ciliopathy-related phenotypes, such as curved bodies, hydrocephalus, abnormal otolith, randomized left-right asymmetry, and pronephric cysts, accompanied with paralyzed pronephric cilia.</text>
</comment>
<accession>F1QHZ6</accession>
<accession>Q502N3</accession>
<sequence>MSNTTVTQKRRTLKVAKSSKTLNVSSGVFRPNQSTTKSINPLFSGKSFGSTGDSKVVDKISAQTPKHTAMVVDENGQDVTPHPLYNPDPGVLQSKQGKVFTALDTSLTTMTEFPSIAFQTTNASLTGPFTRSFFGSASASRISQTAESVTDETKDLLVKQDLSNSISDIQSHREEPKEQLRENILDSTANCYLSETETIWLLDIPAVSVSVESEDAEAVKERNNAYTELCKNRQGNDKYVERSMQTFSDASKTKEVQCDSITMVDKAVMCTVWDMYDSFNNISDVSANTVVSSERHEATIPESSSEGHLVHPKRSNQSLSVVSTVSTVSGSSTHIEKMACVLPLDEEPDLQLILQSDKLKQDLALMERVVLANVFQPKLAAYRQLPIIEDPDCVQMVMEEESWTEQSKNSHCPFLERLWDFSCELTMGRNVSCMVWNKKNPDLLAVGYGQVEFKNPNSGLVCCWSLKNPTWPDRVFHCESGVTALDFSASNANQLAVGMYDGTIAIYNVQTSEQTPITDSSDCANLHTSPVWQLTWIDHEDGLAADKGEILVSVSSDGRISKWIHYKSMECVDLMKLKIHDLQWKRHISSLTPGMCFDFHPNDSKIYLVGTEEGHIHKCSSSYNEQYLESYKAHKRPVYKVTWSPFCSDVFLSCSSDWTIQLWRQDLQIPVMGFTSGQRVVFDIMWSPHCATVFGAVSEGKVEIWDLRVSSLDPTLVNWTSPGVNPTALLFSPETDCVLVGDSEGQVTVYKLKNITAGGGSQGETLEDVIQSTLSSQH</sequence>
<keyword id="KW-0966">Cell projection</keyword>
<keyword id="KW-0969">Cilium</keyword>
<keyword id="KW-0963">Cytoplasm</keyword>
<keyword id="KW-0206">Cytoskeleton</keyword>
<keyword id="KW-0282">Flagellum</keyword>
<keyword id="KW-1185">Reference proteome</keyword>
<keyword id="KW-0677">Repeat</keyword>
<keyword id="KW-0853">WD repeat</keyword>